<evidence type="ECO:0000250" key="1"/>
<evidence type="ECO:0000250" key="2">
    <source>
        <dbReference type="UniProtKB" id="O15263"/>
    </source>
</evidence>
<evidence type="ECO:0000255" key="3"/>
<evidence type="ECO:0000305" key="4"/>
<organism>
    <name type="scientific">Homo sapiens</name>
    <name type="common">Human</name>
    <dbReference type="NCBI Taxonomy" id="9606"/>
    <lineage>
        <taxon>Eukaryota</taxon>
        <taxon>Metazoa</taxon>
        <taxon>Chordata</taxon>
        <taxon>Craniata</taxon>
        <taxon>Vertebrata</taxon>
        <taxon>Euteleostomi</taxon>
        <taxon>Mammalia</taxon>
        <taxon>Eutheria</taxon>
        <taxon>Euarchontoglires</taxon>
        <taxon>Primates</taxon>
        <taxon>Haplorrhini</taxon>
        <taxon>Catarrhini</taxon>
        <taxon>Hominidae</taxon>
        <taxon>Homo</taxon>
    </lineage>
</organism>
<dbReference type="EMBL" id="AC130365">
    <property type="status" value="NOT_ANNOTATED_CDS"/>
    <property type="molecule type" value="Genomic_DNA"/>
</dbReference>
<dbReference type="Ensembl" id="ENST00000382575.2">
    <property type="protein sequence ID" value="ENSP00000518819.1"/>
    <property type="gene ID" value="ENSG00000205989.2"/>
</dbReference>
<dbReference type="HGNC" id="HGNC:43844">
    <property type="gene designation" value="DEFB109C"/>
</dbReference>
<dbReference type="Proteomes" id="UP000005640">
    <property type="component" value="Chromosome 8"/>
</dbReference>
<dbReference type="PANTHER" id="PTHR20515">
    <property type="entry name" value="BETA-DEFENSIN"/>
    <property type="match status" value="1"/>
</dbReference>
<dbReference type="PANTHER" id="PTHR20515:SF3">
    <property type="entry name" value="BETA-DEFENSIN 109B-RELATED"/>
    <property type="match status" value="1"/>
</dbReference>
<dbReference type="SUPFAM" id="SSF57392">
    <property type="entry name" value="Defensin-like"/>
    <property type="match status" value="1"/>
</dbReference>
<name>D109C_HUMAN</name>
<sequence>MRLHLLLLILLLFSILLSPVRGGLGPAEGHCLNLFGVCRTDVCNIVEDQIGACRRRMKCCRAWWILMPIPTPLIMSDYQEPLKPNLK</sequence>
<keyword id="KW-1015">Disulfide bond</keyword>
<keyword id="KW-1185">Reference proteome</keyword>
<keyword id="KW-0964">Secreted</keyword>
<keyword id="KW-0732">Signal</keyword>
<accession>P0DY27</accession>
<reference key="1">
    <citation type="journal article" date="2006" name="Nature">
        <title>DNA sequence and analysis of human chromosome 8.</title>
        <authorList>
            <person name="Nusbaum C."/>
            <person name="Mikkelsen T.S."/>
            <person name="Zody M.C."/>
            <person name="Asakawa S."/>
            <person name="Taudien S."/>
            <person name="Garber M."/>
            <person name="Kodira C.D."/>
            <person name="Schueler M.G."/>
            <person name="Shimizu A."/>
            <person name="Whittaker C.A."/>
            <person name="Chang J.L."/>
            <person name="Cuomo C.A."/>
            <person name="Dewar K."/>
            <person name="FitzGerald M.G."/>
            <person name="Yang X."/>
            <person name="Allen N.R."/>
            <person name="Anderson S."/>
            <person name="Asakawa T."/>
            <person name="Blechschmidt K."/>
            <person name="Bloom T."/>
            <person name="Borowsky M.L."/>
            <person name="Butler J."/>
            <person name="Cook A."/>
            <person name="Corum B."/>
            <person name="DeArellano K."/>
            <person name="DeCaprio D."/>
            <person name="Dooley K.T."/>
            <person name="Dorris L. III"/>
            <person name="Engels R."/>
            <person name="Gloeckner G."/>
            <person name="Hafez N."/>
            <person name="Hagopian D.S."/>
            <person name="Hall J.L."/>
            <person name="Ishikawa S.K."/>
            <person name="Jaffe D.B."/>
            <person name="Kamat A."/>
            <person name="Kudoh J."/>
            <person name="Lehmann R."/>
            <person name="Lokitsang T."/>
            <person name="Macdonald P."/>
            <person name="Major J.E."/>
            <person name="Matthews C.D."/>
            <person name="Mauceli E."/>
            <person name="Menzel U."/>
            <person name="Mihalev A.H."/>
            <person name="Minoshima S."/>
            <person name="Murayama Y."/>
            <person name="Naylor J.W."/>
            <person name="Nicol R."/>
            <person name="Nguyen C."/>
            <person name="O'Leary S.B."/>
            <person name="O'Neill K."/>
            <person name="Parker S.C.J."/>
            <person name="Polley A."/>
            <person name="Raymond C.K."/>
            <person name="Reichwald K."/>
            <person name="Rodriguez J."/>
            <person name="Sasaki T."/>
            <person name="Schilhabel M."/>
            <person name="Siddiqui R."/>
            <person name="Smith C.L."/>
            <person name="Sneddon T.P."/>
            <person name="Talamas J.A."/>
            <person name="Tenzin P."/>
            <person name="Topham K."/>
            <person name="Venkataraman V."/>
            <person name="Wen G."/>
            <person name="Yamazaki S."/>
            <person name="Young S.K."/>
            <person name="Zeng Q."/>
            <person name="Zimmer A.R."/>
            <person name="Rosenthal A."/>
            <person name="Birren B.W."/>
            <person name="Platzer M."/>
            <person name="Shimizu N."/>
            <person name="Lander E.S."/>
        </authorList>
    </citation>
    <scope>NUCLEOTIDE SEQUENCE [LARGE SCALE GENOMIC DNA]</scope>
</reference>
<feature type="signal peptide" evidence="3">
    <location>
        <begin position="1"/>
        <end position="22"/>
    </location>
</feature>
<feature type="chain" id="PRO_0000462116" description="Beta-defensin 109C" evidence="3">
    <location>
        <begin position="23"/>
        <end position="87"/>
    </location>
</feature>
<feature type="disulfide bond" evidence="2">
    <location>
        <begin position="31"/>
        <end position="59"/>
    </location>
</feature>
<feature type="disulfide bond" evidence="2">
    <location>
        <begin position="38"/>
        <end position="53"/>
    </location>
</feature>
<feature type="disulfide bond" evidence="2">
    <location>
        <begin position="43"/>
        <end position="60"/>
    </location>
</feature>
<protein>
    <recommendedName>
        <fullName evidence="4">Beta-defensin 109C</fullName>
    </recommendedName>
</protein>
<comment type="function">
    <text evidence="1">Has antibacterial activity.</text>
</comment>
<comment type="subcellular location">
    <subcellularLocation>
        <location evidence="1">Secreted</location>
    </subcellularLocation>
</comment>
<comment type="similarity">
    <text evidence="4">Belongs to the beta-defensin family.</text>
</comment>
<gene>
    <name type="primary">DEFB109C</name>
</gene>
<proteinExistence type="inferred from homology"/>